<gene>
    <name evidence="1" type="primary">coaX</name>
    <name type="ordered locus">BceJ2315_06870</name>
    <name type="ORF">BCAL0693</name>
</gene>
<protein>
    <recommendedName>
        <fullName evidence="1">Type III pantothenate kinase</fullName>
        <ecNumber evidence="1">2.7.1.33</ecNumber>
    </recommendedName>
    <alternativeName>
        <fullName evidence="1">PanK-III</fullName>
    </alternativeName>
    <alternativeName>
        <fullName evidence="1">Pantothenic acid kinase</fullName>
    </alternativeName>
</protein>
<accession>B4E9P3</accession>
<evidence type="ECO:0000255" key="1">
    <source>
        <dbReference type="HAMAP-Rule" id="MF_01274"/>
    </source>
</evidence>
<evidence type="ECO:0007829" key="2">
    <source>
        <dbReference type="PDB" id="5B8H"/>
    </source>
</evidence>
<proteinExistence type="evidence at protein level"/>
<name>COAX_BURCJ</name>
<dbReference type="EC" id="2.7.1.33" evidence="1"/>
<dbReference type="EMBL" id="AM747720">
    <property type="protein sequence ID" value="CAR51002.1"/>
    <property type="molecule type" value="Genomic_DNA"/>
</dbReference>
<dbReference type="RefSeq" id="WP_006482096.1">
    <property type="nucleotide sequence ID" value="NC_011000.1"/>
</dbReference>
<dbReference type="PDB" id="5B8H">
    <property type="method" value="X-ray"/>
    <property type="resolution" value="2.20 A"/>
    <property type="chains" value="A/B=1-266"/>
</dbReference>
<dbReference type="PDBsum" id="5B8H"/>
<dbReference type="SMR" id="B4E9P3"/>
<dbReference type="KEGG" id="bcj:BCAL0693"/>
<dbReference type="eggNOG" id="COG1521">
    <property type="taxonomic scope" value="Bacteria"/>
</dbReference>
<dbReference type="HOGENOM" id="CLU_066627_0_0_4"/>
<dbReference type="BioCyc" id="BCEN216591:G1G1V-784-MONOMER"/>
<dbReference type="UniPathway" id="UPA00241">
    <property type="reaction ID" value="UER00352"/>
</dbReference>
<dbReference type="EvolutionaryTrace" id="B4E9P3"/>
<dbReference type="Proteomes" id="UP000001035">
    <property type="component" value="Chromosome 1"/>
</dbReference>
<dbReference type="GO" id="GO:0005737">
    <property type="term" value="C:cytoplasm"/>
    <property type="evidence" value="ECO:0007669"/>
    <property type="project" value="UniProtKB-SubCell"/>
</dbReference>
<dbReference type="GO" id="GO:0005524">
    <property type="term" value="F:ATP binding"/>
    <property type="evidence" value="ECO:0007669"/>
    <property type="project" value="UniProtKB-UniRule"/>
</dbReference>
<dbReference type="GO" id="GO:0004594">
    <property type="term" value="F:pantothenate kinase activity"/>
    <property type="evidence" value="ECO:0007669"/>
    <property type="project" value="UniProtKB-UniRule"/>
</dbReference>
<dbReference type="GO" id="GO:0015937">
    <property type="term" value="P:coenzyme A biosynthetic process"/>
    <property type="evidence" value="ECO:0007669"/>
    <property type="project" value="UniProtKB-UniRule"/>
</dbReference>
<dbReference type="CDD" id="cd24015">
    <property type="entry name" value="ASKHA_NBD_PanK-III"/>
    <property type="match status" value="1"/>
</dbReference>
<dbReference type="Gene3D" id="3.30.420.40">
    <property type="match status" value="2"/>
</dbReference>
<dbReference type="HAMAP" id="MF_01274">
    <property type="entry name" value="Pantothen_kinase_3"/>
    <property type="match status" value="1"/>
</dbReference>
<dbReference type="InterPro" id="IPR043129">
    <property type="entry name" value="ATPase_NBD"/>
</dbReference>
<dbReference type="InterPro" id="IPR004619">
    <property type="entry name" value="Type_III_PanK"/>
</dbReference>
<dbReference type="NCBIfam" id="TIGR00671">
    <property type="entry name" value="baf"/>
    <property type="match status" value="1"/>
</dbReference>
<dbReference type="NCBIfam" id="NF009868">
    <property type="entry name" value="PRK13328.1-4"/>
    <property type="match status" value="1"/>
</dbReference>
<dbReference type="PANTHER" id="PTHR34265">
    <property type="entry name" value="TYPE III PANTOTHENATE KINASE"/>
    <property type="match status" value="1"/>
</dbReference>
<dbReference type="PANTHER" id="PTHR34265:SF1">
    <property type="entry name" value="TYPE III PANTOTHENATE KINASE"/>
    <property type="match status" value="1"/>
</dbReference>
<dbReference type="Pfam" id="PF03309">
    <property type="entry name" value="Pan_kinase"/>
    <property type="match status" value="1"/>
</dbReference>
<dbReference type="SUPFAM" id="SSF53067">
    <property type="entry name" value="Actin-like ATPase domain"/>
    <property type="match status" value="2"/>
</dbReference>
<keyword id="KW-0002">3D-structure</keyword>
<keyword id="KW-0067">ATP-binding</keyword>
<keyword id="KW-0173">Coenzyme A biosynthesis</keyword>
<keyword id="KW-0963">Cytoplasm</keyword>
<keyword id="KW-0418">Kinase</keyword>
<keyword id="KW-0547">Nucleotide-binding</keyword>
<keyword id="KW-0630">Potassium</keyword>
<keyword id="KW-0808">Transferase</keyword>
<sequence>MSEPHLLIDAGNSRIKWALADARRTLVDTGAFGHTRDGGADPDWSRLPRPRGAWISNVAGADVAARIDALLDARWPGLPRTTIRSRPAQCGVTNGYTTPEQLGSDRWAGLIGAHAAFPGEHLLIATFGTATTLEALRADGCFTGGLIAPGWALMMRALGTHTAQLPTLTTDIASGLLAGAQAEPFQVDTPRSLSAGCLYAQAGLIERAWRDLVAAWQAPVRLVLAGGAADDVARALTIAHTRHDTLILSGLALIAADAADPATAPD</sequence>
<feature type="chain" id="PRO_1000140227" description="Type III pantothenate kinase">
    <location>
        <begin position="1"/>
        <end position="266"/>
    </location>
</feature>
<feature type="active site" description="Proton acceptor" evidence="1">
    <location>
        <position position="105"/>
    </location>
</feature>
<feature type="binding site" evidence="1">
    <location>
        <begin position="9"/>
        <end position="16"/>
    </location>
    <ligand>
        <name>ATP</name>
        <dbReference type="ChEBI" id="CHEBI:30616"/>
    </ligand>
</feature>
<feature type="binding site" evidence="1">
    <location>
        <position position="96"/>
    </location>
    <ligand>
        <name>substrate</name>
    </ligand>
</feature>
<feature type="binding site" evidence="1">
    <location>
        <begin position="103"/>
        <end position="106"/>
    </location>
    <ligand>
        <name>substrate</name>
    </ligand>
</feature>
<feature type="binding site" evidence="1">
    <location>
        <position position="129"/>
    </location>
    <ligand>
        <name>ATP</name>
        <dbReference type="ChEBI" id="CHEBI:30616"/>
    </ligand>
</feature>
<feature type="binding site" evidence="1">
    <location>
        <position position="189"/>
    </location>
    <ligand>
        <name>substrate</name>
    </ligand>
</feature>
<feature type="strand" evidence="2">
    <location>
        <begin position="5"/>
        <end position="10"/>
    </location>
</feature>
<feature type="strand" evidence="2">
    <location>
        <begin position="12"/>
        <end position="21"/>
    </location>
</feature>
<feature type="turn" evidence="2">
    <location>
        <begin position="22"/>
        <end position="24"/>
    </location>
</feature>
<feature type="strand" evidence="2">
    <location>
        <begin position="25"/>
        <end position="33"/>
    </location>
</feature>
<feature type="helix" evidence="2">
    <location>
        <begin position="35"/>
        <end position="37"/>
    </location>
</feature>
<feature type="strand" evidence="2">
    <location>
        <begin position="51"/>
        <end position="57"/>
    </location>
</feature>
<feature type="helix" evidence="2">
    <location>
        <begin position="61"/>
        <end position="74"/>
    </location>
</feature>
<feature type="strand" evidence="2">
    <location>
        <begin position="80"/>
        <end position="82"/>
    </location>
</feature>
<feature type="strand" evidence="2">
    <location>
        <begin position="87"/>
        <end position="89"/>
    </location>
</feature>
<feature type="strand" evidence="2">
    <location>
        <begin position="92"/>
        <end position="94"/>
    </location>
</feature>
<feature type="helix" evidence="2">
    <location>
        <begin position="99"/>
        <end position="101"/>
    </location>
</feature>
<feature type="helix" evidence="2">
    <location>
        <begin position="104"/>
        <end position="116"/>
    </location>
</feature>
<feature type="strand" evidence="2">
    <location>
        <begin position="121"/>
        <end position="136"/>
    </location>
</feature>
<feature type="strand" evidence="2">
    <location>
        <begin position="140"/>
        <end position="149"/>
    </location>
</feature>
<feature type="helix" evidence="2">
    <location>
        <begin position="151"/>
        <end position="161"/>
    </location>
</feature>
<feature type="helix" evidence="2">
    <location>
        <begin position="170"/>
        <end position="177"/>
    </location>
</feature>
<feature type="helix" evidence="2">
    <location>
        <begin position="179"/>
        <end position="181"/>
    </location>
</feature>
<feature type="strand" evidence="2">
    <location>
        <begin position="184"/>
        <end position="188"/>
    </location>
</feature>
<feature type="helix" evidence="2">
    <location>
        <begin position="189"/>
        <end position="216"/>
    </location>
</feature>
<feature type="strand" evidence="2">
    <location>
        <begin position="220"/>
        <end position="227"/>
    </location>
</feature>
<feature type="helix" evidence="2">
    <location>
        <begin position="229"/>
        <end position="235"/>
    </location>
</feature>
<feature type="helix" evidence="2">
    <location>
        <begin position="246"/>
        <end position="256"/>
    </location>
</feature>
<organism>
    <name type="scientific">Burkholderia cenocepacia (strain ATCC BAA-245 / DSM 16553 / LMG 16656 / NCTC 13227 / J2315 / CF5610)</name>
    <name type="common">Burkholderia cepacia (strain J2315)</name>
    <dbReference type="NCBI Taxonomy" id="216591"/>
    <lineage>
        <taxon>Bacteria</taxon>
        <taxon>Pseudomonadati</taxon>
        <taxon>Pseudomonadota</taxon>
        <taxon>Betaproteobacteria</taxon>
        <taxon>Burkholderiales</taxon>
        <taxon>Burkholderiaceae</taxon>
        <taxon>Burkholderia</taxon>
        <taxon>Burkholderia cepacia complex</taxon>
    </lineage>
</organism>
<reference key="1">
    <citation type="journal article" date="2009" name="J. Bacteriol.">
        <title>The genome of Burkholderia cenocepacia J2315, an epidemic pathogen of cystic fibrosis patients.</title>
        <authorList>
            <person name="Holden M.T."/>
            <person name="Seth-Smith H.M."/>
            <person name="Crossman L.C."/>
            <person name="Sebaihia M."/>
            <person name="Bentley S.D."/>
            <person name="Cerdeno-Tarraga A.M."/>
            <person name="Thomson N.R."/>
            <person name="Bason N."/>
            <person name="Quail M.A."/>
            <person name="Sharp S."/>
            <person name="Cherevach I."/>
            <person name="Churcher C."/>
            <person name="Goodhead I."/>
            <person name="Hauser H."/>
            <person name="Holroyd N."/>
            <person name="Mungall K."/>
            <person name="Scott P."/>
            <person name="Walker D."/>
            <person name="White B."/>
            <person name="Rose H."/>
            <person name="Iversen P."/>
            <person name="Mil-Homens D."/>
            <person name="Rocha E.P."/>
            <person name="Fialho A.M."/>
            <person name="Baldwin A."/>
            <person name="Dowson C."/>
            <person name="Barrell B.G."/>
            <person name="Govan J.R."/>
            <person name="Vandamme P."/>
            <person name="Hart C.A."/>
            <person name="Mahenthiralingam E."/>
            <person name="Parkhill J."/>
        </authorList>
    </citation>
    <scope>NUCLEOTIDE SEQUENCE [LARGE SCALE GENOMIC DNA]</scope>
    <source>
        <strain>ATCC BAA-245 / DSM 16553 / LMG 16656 / NCTC 13227 / J2315 / CF5610</strain>
    </source>
</reference>
<comment type="function">
    <text evidence="1">Catalyzes the phosphorylation of pantothenate (Pan), the first step in CoA biosynthesis.</text>
</comment>
<comment type="catalytic activity">
    <reaction evidence="1">
        <text>(R)-pantothenate + ATP = (R)-4'-phosphopantothenate + ADP + H(+)</text>
        <dbReference type="Rhea" id="RHEA:16373"/>
        <dbReference type="ChEBI" id="CHEBI:10986"/>
        <dbReference type="ChEBI" id="CHEBI:15378"/>
        <dbReference type="ChEBI" id="CHEBI:29032"/>
        <dbReference type="ChEBI" id="CHEBI:30616"/>
        <dbReference type="ChEBI" id="CHEBI:456216"/>
        <dbReference type="EC" id="2.7.1.33"/>
    </reaction>
</comment>
<comment type="cofactor">
    <cofactor evidence="1">
        <name>NH4(+)</name>
        <dbReference type="ChEBI" id="CHEBI:28938"/>
    </cofactor>
    <cofactor evidence="1">
        <name>K(+)</name>
        <dbReference type="ChEBI" id="CHEBI:29103"/>
    </cofactor>
    <text evidence="1">A monovalent cation. Ammonium or potassium.</text>
</comment>
<comment type="pathway">
    <text evidence="1">Cofactor biosynthesis; coenzyme A biosynthesis; CoA from (R)-pantothenate: step 1/5.</text>
</comment>
<comment type="subunit">
    <text evidence="1">Homodimer.</text>
</comment>
<comment type="subcellular location">
    <subcellularLocation>
        <location evidence="1">Cytoplasm</location>
    </subcellularLocation>
</comment>
<comment type="similarity">
    <text evidence="1">Belongs to the type III pantothenate kinase family.</text>
</comment>